<protein>
    <recommendedName>
        <fullName evidence="1">Heat shock protein HspQ</fullName>
    </recommendedName>
</protein>
<sequence>MIASKFGIGQQVRHSLLGYLGVVVDIDPEYSLDEPSPDELAVNDELRAAPWYHVVMEDDNGQPVHTYLAEAQLRSEMRDEHPEQPSMDELARTIRKQLQAPRLRN</sequence>
<comment type="function">
    <text evidence="1">Involved in the degradation of certain denaturated proteins, including DnaA, during heat shock stress.</text>
</comment>
<comment type="subcellular location">
    <subcellularLocation>
        <location evidence="1">Cytoplasm</location>
    </subcellularLocation>
</comment>
<comment type="similarity">
    <text evidence="1">Belongs to the HspQ family.</text>
</comment>
<accession>B5BBK1</accession>
<gene>
    <name evidence="1" type="primary">hspQ</name>
    <name type="ordered locus">SSPA1644</name>
</gene>
<keyword id="KW-0963">Cytoplasm</keyword>
<keyword id="KW-0346">Stress response</keyword>
<proteinExistence type="inferred from homology"/>
<dbReference type="EMBL" id="FM200053">
    <property type="protein sequence ID" value="CAR59836.1"/>
    <property type="molecule type" value="Genomic_DNA"/>
</dbReference>
<dbReference type="RefSeq" id="WP_000561984.1">
    <property type="nucleotide sequence ID" value="NC_011147.1"/>
</dbReference>
<dbReference type="SMR" id="B5BBK1"/>
<dbReference type="KEGG" id="sek:SSPA1644"/>
<dbReference type="HOGENOM" id="CLU_123865_1_0_6"/>
<dbReference type="Proteomes" id="UP000001869">
    <property type="component" value="Chromosome"/>
</dbReference>
<dbReference type="GO" id="GO:0005737">
    <property type="term" value="C:cytoplasm"/>
    <property type="evidence" value="ECO:0007669"/>
    <property type="project" value="UniProtKB-SubCell"/>
</dbReference>
<dbReference type="GO" id="GO:0003677">
    <property type="term" value="F:DNA binding"/>
    <property type="evidence" value="ECO:0007669"/>
    <property type="project" value="InterPro"/>
</dbReference>
<dbReference type="GO" id="GO:0009408">
    <property type="term" value="P:response to heat"/>
    <property type="evidence" value="ECO:0007669"/>
    <property type="project" value="UniProtKB-UniRule"/>
</dbReference>
<dbReference type="Gene3D" id="2.30.30.390">
    <property type="entry name" value="Hemimethylated DNA-binding domain"/>
    <property type="match status" value="1"/>
</dbReference>
<dbReference type="HAMAP" id="MF_01194">
    <property type="entry name" value="HspQ"/>
    <property type="match status" value="1"/>
</dbReference>
<dbReference type="InterPro" id="IPR011722">
    <property type="entry name" value="Hemimethylated_DNA-bd_dom"/>
</dbReference>
<dbReference type="InterPro" id="IPR036623">
    <property type="entry name" value="Hemimethylated_DNA-bd_sf"/>
</dbReference>
<dbReference type="InterPro" id="IPR022866">
    <property type="entry name" value="HspQ"/>
</dbReference>
<dbReference type="NCBIfam" id="NF010729">
    <property type="entry name" value="PRK14129.1"/>
    <property type="match status" value="1"/>
</dbReference>
<dbReference type="NCBIfam" id="TIGR02097">
    <property type="entry name" value="yccV"/>
    <property type="match status" value="1"/>
</dbReference>
<dbReference type="Pfam" id="PF08755">
    <property type="entry name" value="YccV-like"/>
    <property type="match status" value="1"/>
</dbReference>
<dbReference type="SMART" id="SM00992">
    <property type="entry name" value="YccV-like"/>
    <property type="match status" value="1"/>
</dbReference>
<dbReference type="SUPFAM" id="SSF141255">
    <property type="entry name" value="YccV-like"/>
    <property type="match status" value="1"/>
</dbReference>
<evidence type="ECO:0000255" key="1">
    <source>
        <dbReference type="HAMAP-Rule" id="MF_01194"/>
    </source>
</evidence>
<evidence type="ECO:0000256" key="2">
    <source>
        <dbReference type="SAM" id="MobiDB-lite"/>
    </source>
</evidence>
<reference key="1">
    <citation type="journal article" date="2009" name="BMC Genomics">
        <title>Pseudogene accumulation in the evolutionary histories of Salmonella enterica serovars Paratyphi A and Typhi.</title>
        <authorList>
            <person name="Holt K.E."/>
            <person name="Thomson N.R."/>
            <person name="Wain J."/>
            <person name="Langridge G.C."/>
            <person name="Hasan R."/>
            <person name="Bhutta Z.A."/>
            <person name="Quail M.A."/>
            <person name="Norbertczak H."/>
            <person name="Walker D."/>
            <person name="Simmonds M."/>
            <person name="White B."/>
            <person name="Bason N."/>
            <person name="Mungall K."/>
            <person name="Dougan G."/>
            <person name="Parkhill J."/>
        </authorList>
    </citation>
    <scope>NUCLEOTIDE SEQUENCE [LARGE SCALE GENOMIC DNA]</scope>
    <source>
        <strain>AKU_12601</strain>
    </source>
</reference>
<name>HSPQ_SALPK</name>
<organism>
    <name type="scientific">Salmonella paratyphi A (strain AKU_12601)</name>
    <dbReference type="NCBI Taxonomy" id="554290"/>
    <lineage>
        <taxon>Bacteria</taxon>
        <taxon>Pseudomonadati</taxon>
        <taxon>Pseudomonadota</taxon>
        <taxon>Gammaproteobacteria</taxon>
        <taxon>Enterobacterales</taxon>
        <taxon>Enterobacteriaceae</taxon>
        <taxon>Salmonella</taxon>
    </lineage>
</organism>
<feature type="chain" id="PRO_1000138419" description="Heat shock protein HspQ">
    <location>
        <begin position="1"/>
        <end position="105"/>
    </location>
</feature>
<feature type="region of interest" description="Disordered" evidence="2">
    <location>
        <begin position="77"/>
        <end position="105"/>
    </location>
</feature>